<name>TILS_BRASB</name>
<evidence type="ECO:0000255" key="1">
    <source>
        <dbReference type="HAMAP-Rule" id="MF_01161"/>
    </source>
</evidence>
<protein>
    <recommendedName>
        <fullName evidence="1">tRNA(Ile)-lysidine synthase</fullName>
        <ecNumber evidence="1">6.3.4.19</ecNumber>
    </recommendedName>
    <alternativeName>
        <fullName evidence="1">tRNA(Ile)-2-lysyl-cytidine synthase</fullName>
    </alternativeName>
    <alternativeName>
        <fullName evidence="1">tRNA(Ile)-lysidine synthetase</fullName>
    </alternativeName>
</protein>
<feature type="chain" id="PRO_1000085362" description="tRNA(Ile)-lysidine synthase">
    <location>
        <begin position="1"/>
        <end position="358"/>
    </location>
</feature>
<feature type="binding site" evidence="1">
    <location>
        <begin position="35"/>
        <end position="40"/>
    </location>
    <ligand>
        <name>ATP</name>
        <dbReference type="ChEBI" id="CHEBI:30616"/>
    </ligand>
</feature>
<keyword id="KW-0067">ATP-binding</keyword>
<keyword id="KW-0963">Cytoplasm</keyword>
<keyword id="KW-0436">Ligase</keyword>
<keyword id="KW-0547">Nucleotide-binding</keyword>
<keyword id="KW-1185">Reference proteome</keyword>
<keyword id="KW-0819">tRNA processing</keyword>
<accession>A5ERG8</accession>
<organism>
    <name type="scientific">Bradyrhizobium sp. (strain BTAi1 / ATCC BAA-1182)</name>
    <dbReference type="NCBI Taxonomy" id="288000"/>
    <lineage>
        <taxon>Bacteria</taxon>
        <taxon>Pseudomonadati</taxon>
        <taxon>Pseudomonadota</taxon>
        <taxon>Alphaproteobacteria</taxon>
        <taxon>Hyphomicrobiales</taxon>
        <taxon>Nitrobacteraceae</taxon>
        <taxon>Bradyrhizobium</taxon>
    </lineage>
</organism>
<comment type="function">
    <text evidence="1">Ligates lysine onto the cytidine present at position 34 of the AUA codon-specific tRNA(Ile) that contains the anticodon CAU, in an ATP-dependent manner. Cytidine is converted to lysidine, thus changing the amino acid specificity of the tRNA from methionine to isoleucine.</text>
</comment>
<comment type="catalytic activity">
    <reaction evidence="1">
        <text>cytidine(34) in tRNA(Ile2) + L-lysine + ATP = lysidine(34) in tRNA(Ile2) + AMP + diphosphate + H(+)</text>
        <dbReference type="Rhea" id="RHEA:43744"/>
        <dbReference type="Rhea" id="RHEA-COMP:10625"/>
        <dbReference type="Rhea" id="RHEA-COMP:10670"/>
        <dbReference type="ChEBI" id="CHEBI:15378"/>
        <dbReference type="ChEBI" id="CHEBI:30616"/>
        <dbReference type="ChEBI" id="CHEBI:32551"/>
        <dbReference type="ChEBI" id="CHEBI:33019"/>
        <dbReference type="ChEBI" id="CHEBI:82748"/>
        <dbReference type="ChEBI" id="CHEBI:83665"/>
        <dbReference type="ChEBI" id="CHEBI:456215"/>
        <dbReference type="EC" id="6.3.4.19"/>
    </reaction>
</comment>
<comment type="subcellular location">
    <subcellularLocation>
        <location evidence="1">Cytoplasm</location>
    </subcellularLocation>
</comment>
<comment type="domain">
    <text>The N-terminal region contains the highly conserved SGGXDS motif, predicted to be a P-loop motif involved in ATP binding.</text>
</comment>
<comment type="similarity">
    <text evidence="1">Belongs to the tRNA(Ile)-lysidine synthase family.</text>
</comment>
<proteinExistence type="inferred from homology"/>
<sequence>MSTGQSEDHLPISAAEAERLFAPFADSGVLTLAVSGGPDSMALMWLAARWRATRAGGPRLLAVTVDHGLRPESRREALMVKQLARQLGLTHRTLRWSGEKPAAGIPEAARIARYRLLARAAEQAGASHVVTAHTRDDQAETVLMRLLRGSGIAGLAAMAPVSRRDGLLLARPLLSLSKARLLATLRSAGIAFADDPTNRDPAFTRPRLRALMPTLAAEGADPRTLATLANRARRANAAIELMADGAERYLALLAAGRSSKRRGGEGEMFDPRAFAALPAEIRLRLLMRAIDRVGTEGPVELGKAEALLERLDRTLAGITDGGTAERGTLKQTLAGALVSLAKDAIRISPAPPRRRRGE</sequence>
<dbReference type="EC" id="6.3.4.19" evidence="1"/>
<dbReference type="EMBL" id="CP000494">
    <property type="protein sequence ID" value="ABQ38762.1"/>
    <property type="molecule type" value="Genomic_DNA"/>
</dbReference>
<dbReference type="RefSeq" id="WP_012046696.1">
    <property type="nucleotide sequence ID" value="NC_009485.1"/>
</dbReference>
<dbReference type="SMR" id="A5ERG8"/>
<dbReference type="STRING" id="288000.BBta_6875"/>
<dbReference type="KEGG" id="bbt:BBta_6875"/>
<dbReference type="eggNOG" id="COG0037">
    <property type="taxonomic scope" value="Bacteria"/>
</dbReference>
<dbReference type="HOGENOM" id="CLU_018869_3_0_5"/>
<dbReference type="OrthoDB" id="9807403at2"/>
<dbReference type="Proteomes" id="UP000000246">
    <property type="component" value="Chromosome"/>
</dbReference>
<dbReference type="GO" id="GO:0005737">
    <property type="term" value="C:cytoplasm"/>
    <property type="evidence" value="ECO:0007669"/>
    <property type="project" value="UniProtKB-SubCell"/>
</dbReference>
<dbReference type="GO" id="GO:0005524">
    <property type="term" value="F:ATP binding"/>
    <property type="evidence" value="ECO:0007669"/>
    <property type="project" value="UniProtKB-UniRule"/>
</dbReference>
<dbReference type="GO" id="GO:0032267">
    <property type="term" value="F:tRNA(Ile)-lysidine synthase activity"/>
    <property type="evidence" value="ECO:0007669"/>
    <property type="project" value="UniProtKB-EC"/>
</dbReference>
<dbReference type="GO" id="GO:0006400">
    <property type="term" value="P:tRNA modification"/>
    <property type="evidence" value="ECO:0007669"/>
    <property type="project" value="UniProtKB-UniRule"/>
</dbReference>
<dbReference type="CDD" id="cd01992">
    <property type="entry name" value="TilS_N"/>
    <property type="match status" value="1"/>
</dbReference>
<dbReference type="Gene3D" id="3.40.50.620">
    <property type="entry name" value="HUPs"/>
    <property type="match status" value="1"/>
</dbReference>
<dbReference type="HAMAP" id="MF_01161">
    <property type="entry name" value="tRNA_Ile_lys_synt"/>
    <property type="match status" value="1"/>
</dbReference>
<dbReference type="InterPro" id="IPR014729">
    <property type="entry name" value="Rossmann-like_a/b/a_fold"/>
</dbReference>
<dbReference type="InterPro" id="IPR011063">
    <property type="entry name" value="TilS/TtcA_N"/>
</dbReference>
<dbReference type="InterPro" id="IPR012094">
    <property type="entry name" value="tRNA_Ile_lys_synt"/>
</dbReference>
<dbReference type="InterPro" id="IPR012795">
    <property type="entry name" value="tRNA_Ile_lys_synt_N"/>
</dbReference>
<dbReference type="NCBIfam" id="TIGR02432">
    <property type="entry name" value="lysidine_TilS_N"/>
    <property type="match status" value="1"/>
</dbReference>
<dbReference type="PANTHER" id="PTHR43033">
    <property type="entry name" value="TRNA(ILE)-LYSIDINE SYNTHASE-RELATED"/>
    <property type="match status" value="1"/>
</dbReference>
<dbReference type="PANTHER" id="PTHR43033:SF1">
    <property type="entry name" value="TRNA(ILE)-LYSIDINE SYNTHASE-RELATED"/>
    <property type="match status" value="1"/>
</dbReference>
<dbReference type="Pfam" id="PF01171">
    <property type="entry name" value="ATP_bind_3"/>
    <property type="match status" value="1"/>
</dbReference>
<dbReference type="SUPFAM" id="SSF52402">
    <property type="entry name" value="Adenine nucleotide alpha hydrolases-like"/>
    <property type="match status" value="1"/>
</dbReference>
<gene>
    <name evidence="1" type="primary">tilS</name>
    <name type="ordered locus">BBta_6875</name>
</gene>
<reference key="1">
    <citation type="journal article" date="2007" name="Science">
        <title>Legumes symbioses: absence of nod genes in photosynthetic bradyrhizobia.</title>
        <authorList>
            <person name="Giraud E."/>
            <person name="Moulin L."/>
            <person name="Vallenet D."/>
            <person name="Barbe V."/>
            <person name="Cytryn E."/>
            <person name="Avarre J.-C."/>
            <person name="Jaubert M."/>
            <person name="Simon D."/>
            <person name="Cartieaux F."/>
            <person name="Prin Y."/>
            <person name="Bena G."/>
            <person name="Hannibal L."/>
            <person name="Fardoux J."/>
            <person name="Kojadinovic M."/>
            <person name="Vuillet L."/>
            <person name="Lajus A."/>
            <person name="Cruveiller S."/>
            <person name="Rouy Z."/>
            <person name="Mangenot S."/>
            <person name="Segurens B."/>
            <person name="Dossat C."/>
            <person name="Franck W.L."/>
            <person name="Chang W.-S."/>
            <person name="Saunders E."/>
            <person name="Bruce D."/>
            <person name="Richardson P."/>
            <person name="Normand P."/>
            <person name="Dreyfus B."/>
            <person name="Pignol D."/>
            <person name="Stacey G."/>
            <person name="Emerich D."/>
            <person name="Vermeglio A."/>
            <person name="Medigue C."/>
            <person name="Sadowsky M."/>
        </authorList>
    </citation>
    <scope>NUCLEOTIDE SEQUENCE [LARGE SCALE GENOMIC DNA]</scope>
    <source>
        <strain>BTAi1 / ATCC BAA-1182</strain>
    </source>
</reference>